<proteinExistence type="inferred from homology"/>
<accession>B5YDT0</accession>
<feature type="chain" id="PRO_1000090989" description="Aspartate--tRNA(Asp/Asn) ligase">
    <location>
        <begin position="1"/>
        <end position="593"/>
    </location>
</feature>
<feature type="region of interest" description="Aspartate" evidence="1">
    <location>
        <begin position="199"/>
        <end position="202"/>
    </location>
</feature>
<feature type="binding site" evidence="1">
    <location>
        <position position="175"/>
    </location>
    <ligand>
        <name>L-aspartate</name>
        <dbReference type="ChEBI" id="CHEBI:29991"/>
    </ligand>
</feature>
<feature type="binding site" evidence="1">
    <location>
        <begin position="221"/>
        <end position="223"/>
    </location>
    <ligand>
        <name>ATP</name>
        <dbReference type="ChEBI" id="CHEBI:30616"/>
    </ligand>
</feature>
<feature type="binding site" evidence="1">
    <location>
        <position position="221"/>
    </location>
    <ligand>
        <name>L-aspartate</name>
        <dbReference type="ChEBI" id="CHEBI:29991"/>
    </ligand>
</feature>
<feature type="binding site" evidence="1">
    <location>
        <position position="230"/>
    </location>
    <ligand>
        <name>ATP</name>
        <dbReference type="ChEBI" id="CHEBI:30616"/>
    </ligand>
</feature>
<feature type="binding site" evidence="1">
    <location>
        <position position="447"/>
    </location>
    <ligand>
        <name>L-aspartate</name>
        <dbReference type="ChEBI" id="CHEBI:29991"/>
    </ligand>
</feature>
<feature type="binding site" evidence="1">
    <location>
        <position position="481"/>
    </location>
    <ligand>
        <name>ATP</name>
        <dbReference type="ChEBI" id="CHEBI:30616"/>
    </ligand>
</feature>
<feature type="binding site" evidence="1">
    <location>
        <position position="488"/>
    </location>
    <ligand>
        <name>L-aspartate</name>
        <dbReference type="ChEBI" id="CHEBI:29991"/>
    </ligand>
</feature>
<feature type="binding site" evidence="1">
    <location>
        <begin position="533"/>
        <end position="536"/>
    </location>
    <ligand>
        <name>ATP</name>
        <dbReference type="ChEBI" id="CHEBI:30616"/>
    </ligand>
</feature>
<feature type="site" description="Important for tRNA non-discrimination" evidence="1">
    <location>
        <position position="31"/>
    </location>
</feature>
<feature type="site" description="Important for tRNA non-discrimination" evidence="1">
    <location>
        <position position="83"/>
    </location>
</feature>
<organism>
    <name type="scientific">Dictyoglomus thermophilum (strain ATCC 35947 / DSM 3960 / H-6-12)</name>
    <dbReference type="NCBI Taxonomy" id="309799"/>
    <lineage>
        <taxon>Bacteria</taxon>
        <taxon>Pseudomonadati</taxon>
        <taxon>Dictyoglomota</taxon>
        <taxon>Dictyoglomia</taxon>
        <taxon>Dictyoglomales</taxon>
        <taxon>Dictyoglomaceae</taxon>
        <taxon>Dictyoglomus</taxon>
    </lineage>
</organism>
<gene>
    <name evidence="1" type="primary">aspS</name>
    <name type="ordered locus">DICTH_0824</name>
</gene>
<name>SYDND_DICT6</name>
<dbReference type="EC" id="6.1.1.23" evidence="1"/>
<dbReference type="EMBL" id="CP001146">
    <property type="protein sequence ID" value="ACI19182.1"/>
    <property type="molecule type" value="Genomic_DNA"/>
</dbReference>
<dbReference type="RefSeq" id="WP_012547814.1">
    <property type="nucleotide sequence ID" value="NC_011297.1"/>
</dbReference>
<dbReference type="SMR" id="B5YDT0"/>
<dbReference type="STRING" id="309799.DICTH_0824"/>
<dbReference type="PaxDb" id="309799-DICTH_0824"/>
<dbReference type="KEGG" id="dth:DICTH_0824"/>
<dbReference type="eggNOG" id="COG0173">
    <property type="taxonomic scope" value="Bacteria"/>
</dbReference>
<dbReference type="HOGENOM" id="CLU_014330_3_2_0"/>
<dbReference type="OrthoDB" id="9802326at2"/>
<dbReference type="Proteomes" id="UP000001733">
    <property type="component" value="Chromosome"/>
</dbReference>
<dbReference type="GO" id="GO:0005737">
    <property type="term" value="C:cytoplasm"/>
    <property type="evidence" value="ECO:0007669"/>
    <property type="project" value="UniProtKB-SubCell"/>
</dbReference>
<dbReference type="GO" id="GO:0004815">
    <property type="term" value="F:aspartate-tRNA ligase activity"/>
    <property type="evidence" value="ECO:0007669"/>
    <property type="project" value="UniProtKB-UniRule"/>
</dbReference>
<dbReference type="GO" id="GO:0050560">
    <property type="term" value="F:aspartate-tRNA(Asn) ligase activity"/>
    <property type="evidence" value="ECO:0007669"/>
    <property type="project" value="UniProtKB-EC"/>
</dbReference>
<dbReference type="GO" id="GO:0005524">
    <property type="term" value="F:ATP binding"/>
    <property type="evidence" value="ECO:0007669"/>
    <property type="project" value="UniProtKB-UniRule"/>
</dbReference>
<dbReference type="GO" id="GO:0003676">
    <property type="term" value="F:nucleic acid binding"/>
    <property type="evidence" value="ECO:0007669"/>
    <property type="project" value="InterPro"/>
</dbReference>
<dbReference type="GO" id="GO:0006422">
    <property type="term" value="P:aspartyl-tRNA aminoacylation"/>
    <property type="evidence" value="ECO:0007669"/>
    <property type="project" value="UniProtKB-UniRule"/>
</dbReference>
<dbReference type="CDD" id="cd00777">
    <property type="entry name" value="AspRS_core"/>
    <property type="match status" value="1"/>
</dbReference>
<dbReference type="CDD" id="cd04317">
    <property type="entry name" value="EcAspRS_like_N"/>
    <property type="match status" value="1"/>
</dbReference>
<dbReference type="Gene3D" id="3.30.930.10">
    <property type="entry name" value="Bira Bifunctional Protein, Domain 2"/>
    <property type="match status" value="1"/>
</dbReference>
<dbReference type="Gene3D" id="3.30.1360.30">
    <property type="entry name" value="GAD-like domain"/>
    <property type="match status" value="1"/>
</dbReference>
<dbReference type="Gene3D" id="2.40.50.140">
    <property type="entry name" value="Nucleic acid-binding proteins"/>
    <property type="match status" value="1"/>
</dbReference>
<dbReference type="HAMAP" id="MF_00044">
    <property type="entry name" value="Asp_tRNA_synth_type1"/>
    <property type="match status" value="1"/>
</dbReference>
<dbReference type="InterPro" id="IPR004364">
    <property type="entry name" value="Aa-tRNA-synt_II"/>
</dbReference>
<dbReference type="InterPro" id="IPR006195">
    <property type="entry name" value="aa-tRNA-synth_II"/>
</dbReference>
<dbReference type="InterPro" id="IPR045864">
    <property type="entry name" value="aa-tRNA-synth_II/BPL/LPL"/>
</dbReference>
<dbReference type="InterPro" id="IPR004524">
    <property type="entry name" value="Asp-tRNA-ligase_1"/>
</dbReference>
<dbReference type="InterPro" id="IPR047089">
    <property type="entry name" value="Asp-tRNA-ligase_1_N"/>
</dbReference>
<dbReference type="InterPro" id="IPR002312">
    <property type="entry name" value="Asp/Asn-tRNA-synth_IIb"/>
</dbReference>
<dbReference type="InterPro" id="IPR047090">
    <property type="entry name" value="AspRS_core"/>
</dbReference>
<dbReference type="InterPro" id="IPR004115">
    <property type="entry name" value="GAD-like_sf"/>
</dbReference>
<dbReference type="InterPro" id="IPR029351">
    <property type="entry name" value="GAD_dom"/>
</dbReference>
<dbReference type="InterPro" id="IPR012340">
    <property type="entry name" value="NA-bd_OB-fold"/>
</dbReference>
<dbReference type="InterPro" id="IPR004365">
    <property type="entry name" value="NA-bd_OB_tRNA"/>
</dbReference>
<dbReference type="NCBIfam" id="TIGR00459">
    <property type="entry name" value="aspS_bact"/>
    <property type="match status" value="1"/>
</dbReference>
<dbReference type="NCBIfam" id="NF001750">
    <property type="entry name" value="PRK00476.1"/>
    <property type="match status" value="1"/>
</dbReference>
<dbReference type="PANTHER" id="PTHR22594:SF5">
    <property type="entry name" value="ASPARTATE--TRNA LIGASE, MITOCHONDRIAL"/>
    <property type="match status" value="1"/>
</dbReference>
<dbReference type="PANTHER" id="PTHR22594">
    <property type="entry name" value="ASPARTYL/LYSYL-TRNA SYNTHETASE"/>
    <property type="match status" value="1"/>
</dbReference>
<dbReference type="Pfam" id="PF02938">
    <property type="entry name" value="GAD"/>
    <property type="match status" value="1"/>
</dbReference>
<dbReference type="Pfam" id="PF00152">
    <property type="entry name" value="tRNA-synt_2"/>
    <property type="match status" value="1"/>
</dbReference>
<dbReference type="Pfam" id="PF01336">
    <property type="entry name" value="tRNA_anti-codon"/>
    <property type="match status" value="1"/>
</dbReference>
<dbReference type="PRINTS" id="PR01042">
    <property type="entry name" value="TRNASYNTHASP"/>
</dbReference>
<dbReference type="SUPFAM" id="SSF55681">
    <property type="entry name" value="Class II aaRS and biotin synthetases"/>
    <property type="match status" value="1"/>
</dbReference>
<dbReference type="SUPFAM" id="SSF55261">
    <property type="entry name" value="GAD domain-like"/>
    <property type="match status" value="1"/>
</dbReference>
<dbReference type="SUPFAM" id="SSF50249">
    <property type="entry name" value="Nucleic acid-binding proteins"/>
    <property type="match status" value="1"/>
</dbReference>
<dbReference type="PROSITE" id="PS50862">
    <property type="entry name" value="AA_TRNA_LIGASE_II"/>
    <property type="match status" value="1"/>
</dbReference>
<sequence>MRRTHYCGEINIKNVGEKVSLSGWVHRIRHHGGLIFIDLRDRSGIVQLVVDPAISQESYNIADTLGNEWVISVEGKVRKRPEGMENPKIPTGEIEIEVEKINIENPSKPLPFNLWSNKEIDETVRLKYRYLDLRRDKMQSNIIFRHNFILAIRNFLAQNGFIEIETPYLIVSTPEGARDFIIPSRLQPGKFYALPQSPQLFKQILMVSGFDRYFQIARCFRDEDLRADRQPEFTQLDMEMSFVEIEDIFNIIENLFKTTLKNLMNIDITVPFPRITYEEAMNTYGSDKPDLRYDLKISDVTEIFKNLPLEFIRSTLEKNGVIKGIILKNIVPSRREWSIIENKVRELKGKGIMWFTYTDGELKSSISKYLDENTKNKLIENLNLREGDSFFCIAGEWKEVVKILGTLRLEIAELFNIEKKEGLYFLWVTDFPLFEYDEEERRIVAEHHPFTSPKDEDIPLLDTDPLKVKAKCYDLVLNGTELGSGSIRIHKKEIQEKVFNILNITPEDAKKKFGFLLEAFEYGAPPHGGIALGIDRIIAILTKSNSLRDVIAFPKTQSGTCLLTGAPSEVDSKQLEEVHIRVVYPEEKRKEEE</sequence>
<evidence type="ECO:0000255" key="1">
    <source>
        <dbReference type="HAMAP-Rule" id="MF_00044"/>
    </source>
</evidence>
<keyword id="KW-0030">Aminoacyl-tRNA synthetase</keyword>
<keyword id="KW-0067">ATP-binding</keyword>
<keyword id="KW-0963">Cytoplasm</keyword>
<keyword id="KW-0436">Ligase</keyword>
<keyword id="KW-0547">Nucleotide-binding</keyword>
<keyword id="KW-0648">Protein biosynthesis</keyword>
<comment type="function">
    <text evidence="1">Aspartyl-tRNA synthetase with relaxed tRNA specificity since it is able to aspartylate not only its cognate tRNA(Asp) but also tRNA(Asn). Reaction proceeds in two steps: L-aspartate is first activated by ATP to form Asp-AMP and then transferred to the acceptor end of tRNA(Asp/Asn).</text>
</comment>
<comment type="catalytic activity">
    <reaction evidence="1">
        <text>tRNA(Asx) + L-aspartate + ATP = L-aspartyl-tRNA(Asx) + AMP + diphosphate</text>
        <dbReference type="Rhea" id="RHEA:18349"/>
        <dbReference type="Rhea" id="RHEA-COMP:9710"/>
        <dbReference type="Rhea" id="RHEA-COMP:9711"/>
        <dbReference type="ChEBI" id="CHEBI:29991"/>
        <dbReference type="ChEBI" id="CHEBI:30616"/>
        <dbReference type="ChEBI" id="CHEBI:33019"/>
        <dbReference type="ChEBI" id="CHEBI:78442"/>
        <dbReference type="ChEBI" id="CHEBI:78516"/>
        <dbReference type="ChEBI" id="CHEBI:456215"/>
        <dbReference type="EC" id="6.1.1.23"/>
    </reaction>
</comment>
<comment type="subunit">
    <text evidence="1">Homodimer.</text>
</comment>
<comment type="subcellular location">
    <subcellularLocation>
        <location evidence="1">Cytoplasm</location>
    </subcellularLocation>
</comment>
<comment type="similarity">
    <text evidence="1">Belongs to the class-II aminoacyl-tRNA synthetase family. Type 1 subfamily.</text>
</comment>
<protein>
    <recommendedName>
        <fullName evidence="1">Aspartate--tRNA(Asp/Asn) ligase</fullName>
        <ecNumber evidence="1">6.1.1.23</ecNumber>
    </recommendedName>
    <alternativeName>
        <fullName evidence="1">Aspartyl-tRNA synthetase</fullName>
        <shortName evidence="1">AspRS</shortName>
    </alternativeName>
    <alternativeName>
        <fullName evidence="1">Non-discriminating aspartyl-tRNA synthetase</fullName>
        <shortName evidence="1">ND-AspRS</shortName>
    </alternativeName>
</protein>
<reference key="1">
    <citation type="journal article" date="2014" name="Genome Announc.">
        <title>Complete Genome Sequence of the Extreme Thermophile Dictyoglomus thermophilum H-6-12.</title>
        <authorList>
            <person name="Coil D.A."/>
            <person name="Badger J.H."/>
            <person name="Forberger H.C."/>
            <person name="Riggs F."/>
            <person name="Madupu R."/>
            <person name="Fedorova N."/>
            <person name="Ward N."/>
            <person name="Robb F.T."/>
            <person name="Eisen J.A."/>
        </authorList>
    </citation>
    <scope>NUCLEOTIDE SEQUENCE [LARGE SCALE GENOMIC DNA]</scope>
    <source>
        <strain>ATCC 35947 / DSM 3960 / H-6-12</strain>
    </source>
</reference>